<gene>
    <name evidence="3" type="primary">Arp1</name>
    <name type="ORF">MAN_00844</name>
</gene>
<name>ARP1_METAF</name>
<organism>
    <name type="scientific">Metarhizium anisopliae (strain ARSEF 549)</name>
    <dbReference type="NCBI Taxonomy" id="3151832"/>
    <lineage>
        <taxon>Eukaryota</taxon>
        <taxon>Fungi</taxon>
        <taxon>Dikarya</taxon>
        <taxon>Ascomycota</taxon>
        <taxon>Pezizomycotina</taxon>
        <taxon>Sordariomycetes</taxon>
        <taxon>Hypocreomycetidae</taxon>
        <taxon>Hypocreales</taxon>
        <taxon>Clavicipitaceae</taxon>
        <taxon>Metarhizium</taxon>
    </lineage>
</organism>
<keyword id="KW-0456">Lyase</keyword>
<accession>A0A0B4FAW4</accession>
<sequence length="190" mass="21729">MTQSSTPAVETDSKTGSSKAISFQDYLDLSKQAFHNQQPLHLLTQRISFQDWARLRAILAPALYVDYTKIGKEKWDAMSADDFMAMVSNDDFLGDPCVKTQHLIGATYWERVSESKVIGHHQLRAAHQVYTSPDLKTVKLRGHSHATNEHYYVKSGGVWKFAGLKPEVRWNEYKFEEVFKGSYTQSEKHS</sequence>
<evidence type="ECO:0000250" key="1">
    <source>
        <dbReference type="UniProtKB" id="P56221"/>
    </source>
</evidence>
<evidence type="ECO:0000269" key="2">
    <source>
    </source>
</evidence>
<evidence type="ECO:0000303" key="3">
    <source>
    </source>
</evidence>
<evidence type="ECO:0000305" key="4"/>
<evidence type="ECO:0000305" key="5">
    <source>
    </source>
</evidence>
<reference key="1">
    <citation type="journal article" date="2014" name="Proc. Natl. Acad. Sci. U.S.A.">
        <title>Trajectory and genomic determinants of fungal-pathogen speciation and host adaptation.</title>
        <authorList>
            <person name="Hu X."/>
            <person name="Xiao G."/>
            <person name="Zheng P."/>
            <person name="Shang Y."/>
            <person name="Su Y."/>
            <person name="Zhang X."/>
            <person name="Liu X."/>
            <person name="Zhan S."/>
            <person name="St Leger R.J."/>
            <person name="Wang C."/>
        </authorList>
    </citation>
    <scope>NUCLEOTIDE SEQUENCE [LARGE SCALE GENOMIC DNA]</scope>
    <source>
        <strain>ARSEF 549</strain>
    </source>
</reference>
<reference key="2">
    <citation type="journal article" date="2018" name="PLoS Genet.">
        <title>Duplication of a Pks gene cluster and subsequent functional diversification facilitate environmental adaptation in Metarhizium species.</title>
        <authorList>
            <person name="Zeng G."/>
            <person name="Zhang P."/>
            <person name="Zhang Q."/>
            <person name="Zhao H."/>
            <person name="Li Z."/>
            <person name="Zhang X."/>
            <person name="Wang C."/>
            <person name="Yin W.B."/>
            <person name="Fang W."/>
        </authorList>
    </citation>
    <scope>IDENTIFICATION</scope>
    <scope>FUNCTION</scope>
</reference>
<dbReference type="EC" id="4.2.1.-" evidence="5"/>
<dbReference type="EMBL" id="AZNF01000001">
    <property type="protein sequence ID" value="KID71245.1"/>
    <property type="molecule type" value="Genomic_DNA"/>
</dbReference>
<dbReference type="SMR" id="A0A0B4FAW4"/>
<dbReference type="VEuPathDB" id="FungiDB:MAN_00844"/>
<dbReference type="HOGENOM" id="CLU_101889_1_0_1"/>
<dbReference type="OrthoDB" id="2686at5529"/>
<dbReference type="Proteomes" id="UP000031186">
    <property type="component" value="Unassembled WGS sequence"/>
</dbReference>
<dbReference type="GO" id="GO:0030411">
    <property type="term" value="F:scytalone dehydratase activity"/>
    <property type="evidence" value="ECO:0007669"/>
    <property type="project" value="InterPro"/>
</dbReference>
<dbReference type="GO" id="GO:0006582">
    <property type="term" value="P:melanin metabolic process"/>
    <property type="evidence" value="ECO:0007669"/>
    <property type="project" value="InterPro"/>
</dbReference>
<dbReference type="Gene3D" id="3.10.450.50">
    <property type="match status" value="1"/>
</dbReference>
<dbReference type="InterPro" id="IPR032710">
    <property type="entry name" value="NTF2-like_dom_sf"/>
</dbReference>
<dbReference type="InterPro" id="IPR004235">
    <property type="entry name" value="Scytalone_dehydratase"/>
</dbReference>
<dbReference type="InterPro" id="IPR049884">
    <property type="entry name" value="Scytalone_dh"/>
</dbReference>
<dbReference type="Pfam" id="PF02982">
    <property type="entry name" value="Scytalone_dh"/>
    <property type="match status" value="1"/>
</dbReference>
<dbReference type="PIRSF" id="PIRSF024851">
    <property type="entry name" value="SCD1"/>
    <property type="match status" value="1"/>
</dbReference>
<dbReference type="SUPFAM" id="SSF54427">
    <property type="entry name" value="NTF2-like"/>
    <property type="match status" value="1"/>
</dbReference>
<proteinExistence type="inferred from homology"/>
<feature type="chain" id="PRO_0000445913" description="Scytalone dehydratase-like protein Arp1">
    <location>
        <begin position="1"/>
        <end position="190"/>
    </location>
</feature>
<feature type="active site" evidence="1">
    <location>
        <position position="102"/>
    </location>
</feature>
<feature type="active site" evidence="1">
    <location>
        <position position="127"/>
    </location>
</feature>
<feature type="binding site" evidence="1">
    <location>
        <position position="67"/>
    </location>
    <ligand>
        <name>substrate</name>
    </ligand>
</feature>
<feature type="binding site" evidence="1">
    <location>
        <position position="148"/>
    </location>
    <ligand>
        <name>substrate</name>
    </ligand>
</feature>
<comment type="function">
    <text evidence="2">Scytalone dehydratase-like protein; part of the Pks2 gene cluster that mediates the formation of infectious structures (appressoria), enabling these fungi to kill insects faster (PubMed:29958281). The product of the Pks2 gene cluster is different from the one of Pks1 and has still not been identified (PubMed:29958281).</text>
</comment>
<comment type="subunit">
    <text evidence="1">Homotrimer. Each subunit contains an active site, located in the central part of the hydrophobic core of the monomer, which functions independently.</text>
</comment>
<comment type="similarity">
    <text evidence="4">Belongs to the scytalone dehydratase family.</text>
</comment>
<protein>
    <recommendedName>
        <fullName evidence="5">Scytalone dehydratase-like protein Arp1</fullName>
        <ecNumber evidence="5">4.2.1.-</ecNumber>
    </recommendedName>
</protein>